<protein>
    <recommendedName>
        <fullName evidence="1">Non-homologous end joining protein Ku 3</fullName>
    </recommendedName>
</protein>
<proteinExistence type="inferred from homology"/>
<accession>A4FQ42</accession>
<organism>
    <name type="scientific">Saccharopolyspora erythraea (strain ATCC 11635 / DSM 40517 / JCM 4748 / NBRC 13426 / NCIMB 8594 / NRRL 2338)</name>
    <dbReference type="NCBI Taxonomy" id="405948"/>
    <lineage>
        <taxon>Bacteria</taxon>
        <taxon>Bacillati</taxon>
        <taxon>Actinomycetota</taxon>
        <taxon>Actinomycetes</taxon>
        <taxon>Pseudonocardiales</taxon>
        <taxon>Pseudonocardiaceae</taxon>
        <taxon>Saccharopolyspora</taxon>
    </lineage>
</organism>
<reference key="1">
    <citation type="journal article" date="2007" name="Nat. Biotechnol.">
        <title>Complete genome sequence of the erythromycin-producing bacterium Saccharopolyspora erythraea NRRL23338.</title>
        <authorList>
            <person name="Oliynyk M."/>
            <person name="Samborskyy M."/>
            <person name="Lester J.B."/>
            <person name="Mironenko T."/>
            <person name="Scott N."/>
            <person name="Dickens S."/>
            <person name="Haydock S.F."/>
            <person name="Leadlay P.F."/>
        </authorList>
    </citation>
    <scope>NUCLEOTIDE SEQUENCE [LARGE SCALE GENOMIC DNA]</scope>
    <source>
        <strain>ATCC 11635 / DSM 40517 / JCM 4748 / NBRC 13426 / NCIMB 8594 / NRRL 2338</strain>
    </source>
</reference>
<feature type="chain" id="PRO_0000389197" description="Non-homologous end joining protein Ku 3">
    <location>
        <begin position="1"/>
        <end position="263"/>
    </location>
</feature>
<feature type="domain" description="Ku" evidence="1">
    <location>
        <begin position="6"/>
        <end position="169"/>
    </location>
</feature>
<dbReference type="EMBL" id="AM420293">
    <property type="protein sequence ID" value="CAM06167.1"/>
    <property type="status" value="ALT_INIT"/>
    <property type="molecule type" value="Genomic_DNA"/>
</dbReference>
<dbReference type="SMR" id="A4FQ42"/>
<dbReference type="STRING" id="405948.SACE_7006"/>
<dbReference type="KEGG" id="sen:SACE_7006"/>
<dbReference type="eggNOG" id="COG1273">
    <property type="taxonomic scope" value="Bacteria"/>
</dbReference>
<dbReference type="HOGENOM" id="CLU_048975_0_1_11"/>
<dbReference type="Proteomes" id="UP000006728">
    <property type="component" value="Chromosome"/>
</dbReference>
<dbReference type="GO" id="GO:0003690">
    <property type="term" value="F:double-stranded DNA binding"/>
    <property type="evidence" value="ECO:0007669"/>
    <property type="project" value="UniProtKB-UniRule"/>
</dbReference>
<dbReference type="GO" id="GO:0006310">
    <property type="term" value="P:DNA recombination"/>
    <property type="evidence" value="ECO:0007669"/>
    <property type="project" value="UniProtKB-KW"/>
</dbReference>
<dbReference type="GO" id="GO:0006303">
    <property type="term" value="P:double-strand break repair via nonhomologous end joining"/>
    <property type="evidence" value="ECO:0007669"/>
    <property type="project" value="UniProtKB-UniRule"/>
</dbReference>
<dbReference type="CDD" id="cd00789">
    <property type="entry name" value="KU_like"/>
    <property type="match status" value="1"/>
</dbReference>
<dbReference type="Gene3D" id="2.40.290.10">
    <property type="match status" value="1"/>
</dbReference>
<dbReference type="HAMAP" id="MF_01875">
    <property type="entry name" value="Prokaryotic_Ku"/>
    <property type="match status" value="1"/>
</dbReference>
<dbReference type="InterPro" id="IPR006164">
    <property type="entry name" value="Ku70/Ku80_beta-barrel_dom"/>
</dbReference>
<dbReference type="InterPro" id="IPR009187">
    <property type="entry name" value="Prok_Ku"/>
</dbReference>
<dbReference type="InterPro" id="IPR016194">
    <property type="entry name" value="SPOC-like_C_dom_sf"/>
</dbReference>
<dbReference type="NCBIfam" id="TIGR02772">
    <property type="entry name" value="Ku_bact"/>
    <property type="match status" value="1"/>
</dbReference>
<dbReference type="PANTHER" id="PTHR41251">
    <property type="entry name" value="NON-HOMOLOGOUS END JOINING PROTEIN KU"/>
    <property type="match status" value="1"/>
</dbReference>
<dbReference type="PANTHER" id="PTHR41251:SF1">
    <property type="entry name" value="NON-HOMOLOGOUS END JOINING PROTEIN KU"/>
    <property type="match status" value="1"/>
</dbReference>
<dbReference type="Pfam" id="PF02735">
    <property type="entry name" value="Ku"/>
    <property type="match status" value="1"/>
</dbReference>
<dbReference type="PIRSF" id="PIRSF006493">
    <property type="entry name" value="Prok_Ku"/>
    <property type="match status" value="1"/>
</dbReference>
<dbReference type="SMART" id="SM00559">
    <property type="entry name" value="Ku78"/>
    <property type="match status" value="1"/>
</dbReference>
<dbReference type="SUPFAM" id="SSF100939">
    <property type="entry name" value="SPOC domain-like"/>
    <property type="match status" value="1"/>
</dbReference>
<keyword id="KW-0227">DNA damage</keyword>
<keyword id="KW-0233">DNA recombination</keyword>
<keyword id="KW-0234">DNA repair</keyword>
<keyword id="KW-0238">DNA-binding</keyword>
<keyword id="KW-1185">Reference proteome</keyword>
<sequence>MECCRFGLVSVPVQLFTAVERHTIRFHQVQRGTGDRVRQKRVNERTGQEVPFEEVVKGYPTEDGWVIVDPKELEDIAPGRSRTLEIVGFVDLDEIAPVYFRDTYYLAPSGPQYTKVYGLLREALATANRAGIATFVMRNRQYLAALKAEHEVLAVYLLHWADEVRDPHRELGASLPDHSGASEQELRMAVQLIEAMAIDWDPADYHDTYQQQVQALIDAKRAGGTLEPGIPPPRETEAVDLMQALRASVEHARAGRSGDRDTH</sequence>
<comment type="function">
    <text evidence="1">With LigD forms a non-homologous end joining (NHEJ) DNA repair enzyme, which repairs dsDNA breaks with reduced fidelity. Binds linear dsDNA with 5'- and 3'- overhangs but not closed circular dsDNA nor ssDNA. Recruits and stimulates the ligase activity of LigD.</text>
</comment>
<comment type="subunit">
    <text evidence="1">Homodimer. Interacts with LigD.</text>
</comment>
<comment type="similarity">
    <text evidence="1">Belongs to the prokaryotic Ku family.</text>
</comment>
<comment type="sequence caution" evidence="2">
    <conflict type="erroneous initiation">
        <sequence resource="EMBL-CDS" id="CAM06167"/>
    </conflict>
    <text>Truncated N-terminus.</text>
</comment>
<gene>
    <name evidence="1" type="primary">ku3</name>
    <name type="ordered locus">SACE_7006</name>
</gene>
<evidence type="ECO:0000255" key="1">
    <source>
        <dbReference type="HAMAP-Rule" id="MF_01875"/>
    </source>
</evidence>
<evidence type="ECO:0000305" key="2"/>
<name>KU3_SACEN</name>